<feature type="chain" id="PRO_0000071073" description="DnaJ homolog subfamily C member 5">
    <location>
        <begin position="1"/>
        <end position="195"/>
    </location>
</feature>
<feature type="domain" description="J" evidence="3">
    <location>
        <begin position="13"/>
        <end position="82"/>
    </location>
</feature>
<feature type="region of interest" description="Disordered" evidence="4">
    <location>
        <begin position="162"/>
        <end position="195"/>
    </location>
</feature>
<feature type="compositionally biased region" description="Polar residues" evidence="4">
    <location>
        <begin position="174"/>
        <end position="189"/>
    </location>
</feature>
<gene>
    <name evidence="2" type="primary">dnajc5</name>
</gene>
<reference key="1">
    <citation type="journal article" date="1992" name="Neuron">
        <title>Suppression cloning of the cDNA for a candidate subunit of a presynaptic calcium channel.</title>
        <authorList>
            <person name="Gundersen C.B."/>
            <person name="Umbach J.A."/>
        </authorList>
    </citation>
    <scope>NUCLEOTIDE SEQUENCE [MRNA]</scope>
</reference>
<reference key="2">
    <citation type="journal article" date="1994" name="J. Biol. Chem.">
        <title>Extensive lipidation of a Torpedo cysteine string protein.</title>
        <authorList>
            <person name="Gundersen C.B."/>
            <person name="Mastrogiacomo A."/>
            <person name="Faull K."/>
            <person name="Umbach J.A."/>
        </authorList>
    </citation>
    <scope>PALMITOYLATION</scope>
</reference>
<comment type="function">
    <text>May have an important role in presynaptic function. May be involved in calcium-dependent neurotransmitter release at nerve endings.</text>
</comment>
<comment type="subcellular location">
    <subcellularLocation>
        <location evidence="1">Cytoplasm</location>
        <location evidence="1">Cytosol</location>
    </subcellularLocation>
    <subcellularLocation>
        <location evidence="1">Membrane</location>
        <topology evidence="1">Lipid-anchor</topology>
    </subcellularLocation>
    <subcellularLocation>
        <location evidence="1">Cytoplasmic vesicle</location>
        <location evidence="1">Secretory vesicle</location>
        <location evidence="1">Chromaffin granule membrane</location>
    </subcellularLocation>
    <subcellularLocation>
        <location evidence="2">Melanosome</location>
    </subcellularLocation>
    <subcellularLocation>
        <location evidence="2">Cell membrane</location>
    </subcellularLocation>
    <text evidence="1">The association with membranes is regulated by palmitoylation.</text>
</comment>
<comment type="PTM">
    <text evidence="1 5">Palmitoylated (By similarity) (PubMed:8034679). Palmitoylation occurs probably in the cysteine-rich domain and regulates DNAJC5 stable membrane attachment (PubMed:8034679).</text>
</comment>
<name>DNJC5_TETCF</name>
<evidence type="ECO:0000250" key="1">
    <source>
        <dbReference type="UniProtKB" id="Q29455"/>
    </source>
</evidence>
<evidence type="ECO:0000250" key="2">
    <source>
        <dbReference type="UniProtKB" id="Q9H3Z4"/>
    </source>
</evidence>
<evidence type="ECO:0000255" key="3">
    <source>
        <dbReference type="PROSITE-ProRule" id="PRU00286"/>
    </source>
</evidence>
<evidence type="ECO:0000256" key="4">
    <source>
        <dbReference type="SAM" id="MobiDB-lite"/>
    </source>
</evidence>
<evidence type="ECO:0000269" key="5">
    <source>
    </source>
</evidence>
<evidence type="ECO:0000312" key="6">
    <source>
        <dbReference type="EMBL" id="M99327"/>
    </source>
</evidence>
<accession>P56101</accession>
<sequence length="195" mass="21791">MGDQRQRSLSTSGDSLYIVLGLDKNASPEDIKKSYRKLALKYHPDKNPDNPEASEKFKEINNAHAILTDATKRNIYDKYGSLGLYVAEQFGEENVNTYFVLSSWWAKALFVFCGVITGCYFCCCLCCCCNCCCGKCKPKPPEGEEQEYYVSPEDLEAQLQSDMEKEGDGAIVVQPTSATETTQLTSDSHPSYHTE</sequence>
<organism>
    <name type="scientific">Tetronarce californica</name>
    <name type="common">Pacific electric ray</name>
    <name type="synonym">Torpedo californica</name>
    <dbReference type="NCBI Taxonomy" id="7787"/>
    <lineage>
        <taxon>Eukaryota</taxon>
        <taxon>Metazoa</taxon>
        <taxon>Chordata</taxon>
        <taxon>Craniata</taxon>
        <taxon>Vertebrata</taxon>
        <taxon>Chondrichthyes</taxon>
        <taxon>Elasmobranchii</taxon>
        <taxon>Batoidea</taxon>
        <taxon>Torpediniformes</taxon>
        <taxon>Torpedinidae</taxon>
        <taxon>Tetronarce</taxon>
    </lineage>
</organism>
<proteinExistence type="evidence at protein level"/>
<keyword id="KW-1003">Cell membrane</keyword>
<keyword id="KW-0143">Chaperone</keyword>
<keyword id="KW-0963">Cytoplasm</keyword>
<keyword id="KW-0968">Cytoplasmic vesicle</keyword>
<keyword id="KW-0449">Lipoprotein</keyword>
<keyword id="KW-0472">Membrane</keyword>
<keyword id="KW-0564">Palmitate</keyword>
<dbReference type="EMBL" id="M99327">
    <property type="status" value="NOT_ANNOTATED_CDS"/>
    <property type="molecule type" value="mRNA"/>
</dbReference>
<dbReference type="PIR" id="JH0719">
    <property type="entry name" value="JH0719"/>
</dbReference>
<dbReference type="SMR" id="P56101"/>
<dbReference type="SwissPalm" id="P56101"/>
<dbReference type="GO" id="GO:0042584">
    <property type="term" value="C:chromaffin granule membrane"/>
    <property type="evidence" value="ECO:0007669"/>
    <property type="project" value="UniProtKB-SubCell"/>
</dbReference>
<dbReference type="GO" id="GO:0005829">
    <property type="term" value="C:cytosol"/>
    <property type="evidence" value="ECO:0000250"/>
    <property type="project" value="UniProtKB"/>
</dbReference>
<dbReference type="GO" id="GO:0042470">
    <property type="term" value="C:melanosome"/>
    <property type="evidence" value="ECO:0007669"/>
    <property type="project" value="UniProtKB-SubCell"/>
</dbReference>
<dbReference type="GO" id="GO:0016020">
    <property type="term" value="C:membrane"/>
    <property type="evidence" value="ECO:0000250"/>
    <property type="project" value="UniProtKB"/>
</dbReference>
<dbReference type="GO" id="GO:0005886">
    <property type="term" value="C:plasma membrane"/>
    <property type="evidence" value="ECO:0007669"/>
    <property type="project" value="UniProtKB-SubCell"/>
</dbReference>
<dbReference type="GO" id="GO:0098793">
    <property type="term" value="C:presynapse"/>
    <property type="evidence" value="ECO:0007669"/>
    <property type="project" value="TreeGrafter"/>
</dbReference>
<dbReference type="GO" id="GO:0061077">
    <property type="term" value="P:chaperone-mediated protein folding"/>
    <property type="evidence" value="ECO:0007669"/>
    <property type="project" value="TreeGrafter"/>
</dbReference>
<dbReference type="GO" id="GO:0098693">
    <property type="term" value="P:regulation of synaptic vesicle cycle"/>
    <property type="evidence" value="ECO:0007669"/>
    <property type="project" value="TreeGrafter"/>
</dbReference>
<dbReference type="CDD" id="cd06257">
    <property type="entry name" value="DnaJ"/>
    <property type="match status" value="1"/>
</dbReference>
<dbReference type="FunFam" id="1.10.287.110:FF:000017">
    <property type="entry name" value="dnaJ homolog subfamily C member 5"/>
    <property type="match status" value="1"/>
</dbReference>
<dbReference type="Gene3D" id="1.10.287.110">
    <property type="entry name" value="DnaJ domain"/>
    <property type="match status" value="1"/>
</dbReference>
<dbReference type="InterPro" id="IPR051434">
    <property type="entry name" value="DnaJ_C_subfamily_member5"/>
</dbReference>
<dbReference type="InterPro" id="IPR001623">
    <property type="entry name" value="DnaJ_domain"/>
</dbReference>
<dbReference type="InterPro" id="IPR018253">
    <property type="entry name" value="DnaJ_domain_CS"/>
</dbReference>
<dbReference type="InterPro" id="IPR036869">
    <property type="entry name" value="J_dom_sf"/>
</dbReference>
<dbReference type="PANTHER" id="PTHR44027:SF1">
    <property type="entry name" value="DNAJ HOMOLOG SUBFAMILY C MEMBER 5"/>
    <property type="match status" value="1"/>
</dbReference>
<dbReference type="PANTHER" id="PTHR44027">
    <property type="entry name" value="DNAJ HOMOLOG SUBFAMILY C MEMBER 5 HOMOLOG"/>
    <property type="match status" value="1"/>
</dbReference>
<dbReference type="Pfam" id="PF00226">
    <property type="entry name" value="DnaJ"/>
    <property type="match status" value="1"/>
</dbReference>
<dbReference type="PRINTS" id="PR00625">
    <property type="entry name" value="JDOMAIN"/>
</dbReference>
<dbReference type="SMART" id="SM00271">
    <property type="entry name" value="DnaJ"/>
    <property type="match status" value="1"/>
</dbReference>
<dbReference type="SUPFAM" id="SSF46565">
    <property type="entry name" value="Chaperone J-domain"/>
    <property type="match status" value="1"/>
</dbReference>
<dbReference type="PROSITE" id="PS00636">
    <property type="entry name" value="DNAJ_1"/>
    <property type="match status" value="1"/>
</dbReference>
<dbReference type="PROSITE" id="PS50076">
    <property type="entry name" value="DNAJ_2"/>
    <property type="match status" value="1"/>
</dbReference>
<protein>
    <recommendedName>
        <fullName evidence="2">DnaJ homolog subfamily C member 5</fullName>
    </recommendedName>
    <alternativeName>
        <fullName evidence="6">CCCS1</fullName>
    </alternativeName>
    <alternativeName>
        <fullName evidence="2">Cysteine string protein</fullName>
        <shortName evidence="2">CSP</shortName>
    </alternativeName>
</protein>